<protein>
    <recommendedName>
        <fullName>Uncharacterized glycosyltransferase R139</fullName>
        <ecNumber>2.4.-.-</ecNumber>
    </recommendedName>
</protein>
<organismHost>
    <name type="scientific">Acanthamoeba polyphaga</name>
    <name type="common">Amoeba</name>
    <dbReference type="NCBI Taxonomy" id="5757"/>
</organismHost>
<feature type="chain" id="PRO_0000247381" description="Uncharacterized glycosyltransferase R139">
    <location>
        <begin position="1"/>
        <end position="248"/>
    </location>
</feature>
<keyword id="KW-0328">Glycosyltransferase</keyword>
<keyword id="KW-1185">Reference proteome</keyword>
<keyword id="KW-0808">Transferase</keyword>
<organism>
    <name type="scientific">Acanthamoeba polyphaga mimivirus</name>
    <name type="common">APMV</name>
    <dbReference type="NCBI Taxonomy" id="212035"/>
    <lineage>
        <taxon>Viruses</taxon>
        <taxon>Varidnaviria</taxon>
        <taxon>Bamfordvirae</taxon>
        <taxon>Nucleocytoviricota</taxon>
        <taxon>Megaviricetes</taxon>
        <taxon>Imitervirales</taxon>
        <taxon>Mimiviridae</taxon>
        <taxon>Megamimivirinae</taxon>
        <taxon>Mimivirus</taxon>
        <taxon>Mimivirus bradfordmassiliense</taxon>
    </lineage>
</organism>
<name>YR139_MIMIV</name>
<proteinExistence type="inferred from homology"/>
<accession>Q5UR14</accession>
<reference key="1">
    <citation type="journal article" date="2004" name="Science">
        <title>The 1.2-megabase genome sequence of Mimivirus.</title>
        <authorList>
            <person name="Raoult D."/>
            <person name="Audic S."/>
            <person name="Robert C."/>
            <person name="Abergel C."/>
            <person name="Renesto P."/>
            <person name="Ogata H."/>
            <person name="La Scola B."/>
            <person name="Susan M."/>
            <person name="Claverie J.-M."/>
        </authorList>
    </citation>
    <scope>NUCLEOTIDE SEQUENCE [LARGE SCALE GENOMIC DNA]</scope>
    <source>
        <strain>Rowbotham-Bradford</strain>
    </source>
</reference>
<dbReference type="EC" id="2.4.-.-"/>
<dbReference type="EMBL" id="AY653733">
    <property type="protein sequence ID" value="AAV50414.1"/>
    <property type="molecule type" value="Genomic_DNA"/>
</dbReference>
<dbReference type="SMR" id="Q5UR14"/>
<dbReference type="CAZy" id="GT2">
    <property type="family name" value="Glycosyltransferase Family 2"/>
</dbReference>
<dbReference type="KEGG" id="vg:9924740"/>
<dbReference type="Proteomes" id="UP000001134">
    <property type="component" value="Genome"/>
</dbReference>
<dbReference type="GO" id="GO:0016757">
    <property type="term" value="F:glycosyltransferase activity"/>
    <property type="evidence" value="ECO:0007669"/>
    <property type="project" value="UniProtKB-KW"/>
</dbReference>
<dbReference type="CDD" id="cd00761">
    <property type="entry name" value="Glyco_tranf_GTA_type"/>
    <property type="match status" value="1"/>
</dbReference>
<dbReference type="Gene3D" id="3.90.550.10">
    <property type="entry name" value="Spore Coat Polysaccharide Biosynthesis Protein SpsA, Chain A"/>
    <property type="match status" value="1"/>
</dbReference>
<dbReference type="InterPro" id="IPR001173">
    <property type="entry name" value="Glyco_trans_2-like"/>
</dbReference>
<dbReference type="InterPro" id="IPR029044">
    <property type="entry name" value="Nucleotide-diphossugar_trans"/>
</dbReference>
<dbReference type="Pfam" id="PF00535">
    <property type="entry name" value="Glycos_transf_2"/>
    <property type="match status" value="1"/>
</dbReference>
<dbReference type="SUPFAM" id="SSF53448">
    <property type="entry name" value="Nucleotide-diphospho-sugar transferases"/>
    <property type="match status" value="1"/>
</dbReference>
<sequence>MSNQATSEIKFVIVIATYYRKDGLTLKYLTRCLESVKKQTYTNWVVYLIGDEYENTDEFNKFATLIDTNKIIIHNKPDPERKHILDKSRLWNIAGASAMNYGLNLARSNGEKYYVHLDDDDFWESKHLENLYQAYQNYSNCIFAYTKSTYPYAHVVPNKILPREDIKSIFPNNLLPRNSNLIHSSVSFRCDIIPFDYHTTHNVSEIKGPSDAIMWDTIRQFILSNPAYCCIFIPEVTCRHDEEGSIKN</sequence>
<comment type="similarity">
    <text evidence="1">Belongs to the glycosyltransferase 2 family.</text>
</comment>
<evidence type="ECO:0000305" key="1"/>
<gene>
    <name type="ordered locus">MIMI_R139</name>
</gene>